<protein>
    <recommendedName>
        <fullName>Increased rDNA silencing protein 4</fullName>
    </recommendedName>
</protein>
<proteinExistence type="inferred from homology"/>
<comment type="function">
    <text evidence="1">Positive regulator of phosphatidylinositol 4,5-bisphosphate turnover and negatively regulates signaling through the cell integrity pathway. Involved in rDNA silencing (By similarity).</text>
</comment>
<comment type="similarity">
    <text evidence="4">Belongs to the IRS4 family.</text>
</comment>
<sequence>MSASVTSSDGRGPASPTSSSTGASTNPATSGLAAALKGATLAFQHQQRTAAKGSDTAVPRPHGGSRVPTPGTGSVSTSTSRTVGGSNGARLAATLAAREHSPPTTSKNEASRVVTSTPSSSSSVGSAGRTNRQELHGQATGGSSQQQQQQQHVEERANDHAPSKRPAMRSRRPSLASLSSQAVDNSHSHPPTPASAKPSSEPKSVSWIAATLAATSIAPTTSLVAMFDGKQEEAETATKKKKKKKPRPASKTQHHQTLTSPSPTPSEGLSIENQCGTGGVPSVASGKSKVAPKPKPKPRRDISLSTVESIKSSTGAMGRDGKSSNQEQGETRNRNGDVRDKPSREGGKVTVTGAKDIVFEGTSERRSQQKVPATPRSVQSKQGVEVPTDKRPSTPPVSQHAQISETTIISPQPRRVVSTPRLESSPAVPKTYKTVTNPRPDNKPTIRKSSRVVSPSVDQSQTIRQSAETGLGDRHTSRNSTSSDETFVSASSSPSPRPQTPTKELERVRPRLDRANTSTSSRASRVSTPASVRSPASQTRPSPVLRPGTGLYSYSTGASPTPEMSLDSLTNAMIASNLASSRLTALTQTSLESPGLPPVPPPRRGHRHHHLPHPHLRHRTQSPPHARPLIPQRTADSLPVRTGPSRQTEHTQPASLLKTLRAPRSLSDDEDLRLQTHRHRKKHLGGKKHAHNEGARRRWRDEMTIRQRRRYEAVWASNRGLFLRPGFAFEHPENWQPLPPPDDSLGQVDLSRAWESPEADLVVNVVVRDIWSRSRLPVDELAEVWELVDRRKCGALDKQEFVVGMWLIDQRLRGRKIPTVVGEGVWESAMDRVLSVNVKAPKAHKGRTKGHLKGVF</sequence>
<dbReference type="EMBL" id="CM002238">
    <property type="protein sequence ID" value="EAA33644.1"/>
    <property type="molecule type" value="Genomic_DNA"/>
</dbReference>
<dbReference type="RefSeq" id="XP_962880.1">
    <property type="nucleotide sequence ID" value="XM_957787.3"/>
</dbReference>
<dbReference type="SMR" id="Q7SB65"/>
<dbReference type="STRING" id="367110.Q7SB65"/>
<dbReference type="PaxDb" id="5141-EFNCRP00000006026"/>
<dbReference type="EnsemblFungi" id="EAA33644">
    <property type="protein sequence ID" value="EAA33644"/>
    <property type="gene ID" value="NCU06276"/>
</dbReference>
<dbReference type="GeneID" id="3879019"/>
<dbReference type="KEGG" id="ncr:NCU06276"/>
<dbReference type="VEuPathDB" id="FungiDB:NCU06276"/>
<dbReference type="HOGENOM" id="CLU_014603_0_0_1"/>
<dbReference type="InParanoid" id="Q7SB65"/>
<dbReference type="OMA" id="AEVWELV"/>
<dbReference type="OrthoDB" id="10045710at2759"/>
<dbReference type="Proteomes" id="UP000001805">
    <property type="component" value="Chromosome 3, Linkage Group III"/>
</dbReference>
<dbReference type="GO" id="GO:0005737">
    <property type="term" value="C:cytoplasm"/>
    <property type="evidence" value="ECO:0000318"/>
    <property type="project" value="GO_Central"/>
</dbReference>
<dbReference type="GO" id="GO:0006629">
    <property type="term" value="P:lipid metabolic process"/>
    <property type="evidence" value="ECO:0007669"/>
    <property type="project" value="UniProtKB-KW"/>
</dbReference>
<dbReference type="CDD" id="cd00052">
    <property type="entry name" value="EH"/>
    <property type="match status" value="1"/>
</dbReference>
<dbReference type="Gene3D" id="1.10.238.10">
    <property type="entry name" value="EF-hand"/>
    <property type="match status" value="1"/>
</dbReference>
<dbReference type="InterPro" id="IPR011992">
    <property type="entry name" value="EF-hand-dom_pair"/>
</dbReference>
<dbReference type="InterPro" id="IPR000261">
    <property type="entry name" value="EH_dom"/>
</dbReference>
<dbReference type="Pfam" id="PF12763">
    <property type="entry name" value="EH"/>
    <property type="match status" value="1"/>
</dbReference>
<dbReference type="SMART" id="SM00027">
    <property type="entry name" value="EH"/>
    <property type="match status" value="1"/>
</dbReference>
<dbReference type="SUPFAM" id="SSF47473">
    <property type="entry name" value="EF-hand"/>
    <property type="match status" value="1"/>
</dbReference>
<dbReference type="PROSITE" id="PS50031">
    <property type="entry name" value="EH"/>
    <property type="match status" value="1"/>
</dbReference>
<feature type="chain" id="PRO_0000308762" description="Increased rDNA silencing protein 4">
    <location>
        <begin position="1"/>
        <end position="856"/>
    </location>
</feature>
<feature type="domain" description="EH" evidence="2">
    <location>
        <begin position="743"/>
        <end position="832"/>
    </location>
</feature>
<feature type="region of interest" description="Disordered" evidence="3">
    <location>
        <begin position="1"/>
        <end position="204"/>
    </location>
</feature>
<feature type="region of interest" description="Disordered" evidence="3">
    <location>
        <begin position="230"/>
        <end position="563"/>
    </location>
</feature>
<feature type="region of interest" description="Disordered" evidence="3">
    <location>
        <begin position="589"/>
        <end position="672"/>
    </location>
</feature>
<feature type="compositionally biased region" description="Low complexity" evidence="3">
    <location>
        <begin position="12"/>
        <end position="42"/>
    </location>
</feature>
<feature type="compositionally biased region" description="Low complexity" evidence="3">
    <location>
        <begin position="67"/>
        <end position="84"/>
    </location>
</feature>
<feature type="compositionally biased region" description="Low complexity" evidence="3">
    <location>
        <begin position="111"/>
        <end position="130"/>
    </location>
</feature>
<feature type="compositionally biased region" description="Basic and acidic residues" evidence="3">
    <location>
        <begin position="152"/>
        <end position="162"/>
    </location>
</feature>
<feature type="compositionally biased region" description="Low complexity" evidence="3">
    <location>
        <begin position="194"/>
        <end position="204"/>
    </location>
</feature>
<feature type="compositionally biased region" description="Basic residues" evidence="3">
    <location>
        <begin position="239"/>
        <end position="254"/>
    </location>
</feature>
<feature type="compositionally biased region" description="Polar residues" evidence="3">
    <location>
        <begin position="255"/>
        <end position="275"/>
    </location>
</feature>
<feature type="compositionally biased region" description="Polar residues" evidence="3">
    <location>
        <begin position="303"/>
        <end position="315"/>
    </location>
</feature>
<feature type="compositionally biased region" description="Basic and acidic residues" evidence="3">
    <location>
        <begin position="329"/>
        <end position="347"/>
    </location>
</feature>
<feature type="compositionally biased region" description="Polar residues" evidence="3">
    <location>
        <begin position="396"/>
        <end position="410"/>
    </location>
</feature>
<feature type="compositionally biased region" description="Polar residues" evidence="3">
    <location>
        <begin position="451"/>
        <end position="468"/>
    </location>
</feature>
<feature type="compositionally biased region" description="Polar residues" evidence="3">
    <location>
        <begin position="478"/>
        <end position="488"/>
    </location>
</feature>
<feature type="compositionally biased region" description="Basic and acidic residues" evidence="3">
    <location>
        <begin position="503"/>
        <end position="514"/>
    </location>
</feature>
<feature type="compositionally biased region" description="Low complexity" evidence="3">
    <location>
        <begin position="517"/>
        <end position="535"/>
    </location>
</feature>
<feature type="compositionally biased region" description="Basic residues" evidence="3">
    <location>
        <begin position="603"/>
        <end position="620"/>
    </location>
</feature>
<feature type="compositionally biased region" description="Polar residues" evidence="3">
    <location>
        <begin position="644"/>
        <end position="654"/>
    </location>
</feature>
<name>IRS4_NEUCR</name>
<evidence type="ECO:0000250" key="1"/>
<evidence type="ECO:0000255" key="2">
    <source>
        <dbReference type="PROSITE-ProRule" id="PRU00077"/>
    </source>
</evidence>
<evidence type="ECO:0000256" key="3">
    <source>
        <dbReference type="SAM" id="MobiDB-lite"/>
    </source>
</evidence>
<evidence type="ECO:0000305" key="4"/>
<organism>
    <name type="scientific">Neurospora crassa (strain ATCC 24698 / 74-OR23-1A / CBS 708.71 / DSM 1257 / FGSC 987)</name>
    <dbReference type="NCBI Taxonomy" id="367110"/>
    <lineage>
        <taxon>Eukaryota</taxon>
        <taxon>Fungi</taxon>
        <taxon>Dikarya</taxon>
        <taxon>Ascomycota</taxon>
        <taxon>Pezizomycotina</taxon>
        <taxon>Sordariomycetes</taxon>
        <taxon>Sordariomycetidae</taxon>
        <taxon>Sordariales</taxon>
        <taxon>Sordariaceae</taxon>
        <taxon>Neurospora</taxon>
    </lineage>
</organism>
<accession>Q7SB65</accession>
<keyword id="KW-0443">Lipid metabolism</keyword>
<keyword id="KW-1185">Reference proteome</keyword>
<reference key="1">
    <citation type="journal article" date="2003" name="Nature">
        <title>The genome sequence of the filamentous fungus Neurospora crassa.</title>
        <authorList>
            <person name="Galagan J.E."/>
            <person name="Calvo S.E."/>
            <person name="Borkovich K.A."/>
            <person name="Selker E.U."/>
            <person name="Read N.D."/>
            <person name="Jaffe D.B."/>
            <person name="FitzHugh W."/>
            <person name="Ma L.-J."/>
            <person name="Smirnov S."/>
            <person name="Purcell S."/>
            <person name="Rehman B."/>
            <person name="Elkins T."/>
            <person name="Engels R."/>
            <person name="Wang S."/>
            <person name="Nielsen C.B."/>
            <person name="Butler J."/>
            <person name="Endrizzi M."/>
            <person name="Qui D."/>
            <person name="Ianakiev P."/>
            <person name="Bell-Pedersen D."/>
            <person name="Nelson M.A."/>
            <person name="Werner-Washburne M."/>
            <person name="Selitrennikoff C.P."/>
            <person name="Kinsey J.A."/>
            <person name="Braun E.L."/>
            <person name="Zelter A."/>
            <person name="Schulte U."/>
            <person name="Kothe G.O."/>
            <person name="Jedd G."/>
            <person name="Mewes H.-W."/>
            <person name="Staben C."/>
            <person name="Marcotte E."/>
            <person name="Greenberg D."/>
            <person name="Roy A."/>
            <person name="Foley K."/>
            <person name="Naylor J."/>
            <person name="Stange-Thomann N."/>
            <person name="Barrett R."/>
            <person name="Gnerre S."/>
            <person name="Kamal M."/>
            <person name="Kamvysselis M."/>
            <person name="Mauceli E.W."/>
            <person name="Bielke C."/>
            <person name="Rudd S."/>
            <person name="Frishman D."/>
            <person name="Krystofova S."/>
            <person name="Rasmussen C."/>
            <person name="Metzenberg R.L."/>
            <person name="Perkins D.D."/>
            <person name="Kroken S."/>
            <person name="Cogoni C."/>
            <person name="Macino G."/>
            <person name="Catcheside D.E.A."/>
            <person name="Li W."/>
            <person name="Pratt R.J."/>
            <person name="Osmani S.A."/>
            <person name="DeSouza C.P.C."/>
            <person name="Glass N.L."/>
            <person name="Orbach M.J."/>
            <person name="Berglund J.A."/>
            <person name="Voelker R."/>
            <person name="Yarden O."/>
            <person name="Plamann M."/>
            <person name="Seiler S."/>
            <person name="Dunlap J.C."/>
            <person name="Radford A."/>
            <person name="Aramayo R."/>
            <person name="Natvig D.O."/>
            <person name="Alex L.A."/>
            <person name="Mannhaupt G."/>
            <person name="Ebbole D.J."/>
            <person name="Freitag M."/>
            <person name="Paulsen I."/>
            <person name="Sachs M.S."/>
            <person name="Lander E.S."/>
            <person name="Nusbaum C."/>
            <person name="Birren B.W."/>
        </authorList>
    </citation>
    <scope>NUCLEOTIDE SEQUENCE [LARGE SCALE GENOMIC DNA]</scope>
    <source>
        <strain>ATCC 24698 / 74-OR23-1A / CBS 708.71 / DSM 1257 / FGSC 987</strain>
    </source>
</reference>
<gene>
    <name type="primary">irs-4</name>
    <name type="ORF">NCU06276</name>
</gene>